<dbReference type="EC" id="2.8.1.-" evidence="1"/>
<dbReference type="EMBL" id="CP000950">
    <property type="protein sequence ID" value="ACA66585.1"/>
    <property type="molecule type" value="Genomic_DNA"/>
</dbReference>
<dbReference type="RefSeq" id="WP_002212320.1">
    <property type="nucleotide sequence ID" value="NZ_CP009792.1"/>
</dbReference>
<dbReference type="SMR" id="B1JIV0"/>
<dbReference type="GeneID" id="57974406"/>
<dbReference type="KEGG" id="ypy:YPK_0272"/>
<dbReference type="PATRIC" id="fig|502800.11.peg.878"/>
<dbReference type="GO" id="GO:1990228">
    <property type="term" value="C:sulfurtransferase complex"/>
    <property type="evidence" value="ECO:0007669"/>
    <property type="project" value="TreeGrafter"/>
</dbReference>
<dbReference type="GO" id="GO:0097163">
    <property type="term" value="F:sulfur carrier activity"/>
    <property type="evidence" value="ECO:0007669"/>
    <property type="project" value="TreeGrafter"/>
</dbReference>
<dbReference type="GO" id="GO:0016783">
    <property type="term" value="F:sulfurtransferase activity"/>
    <property type="evidence" value="ECO:0007669"/>
    <property type="project" value="UniProtKB-UniRule"/>
</dbReference>
<dbReference type="GO" id="GO:0002143">
    <property type="term" value="P:tRNA wobble position uridine thiolation"/>
    <property type="evidence" value="ECO:0007669"/>
    <property type="project" value="TreeGrafter"/>
</dbReference>
<dbReference type="FunFam" id="3.40.1260.10:FF:000001">
    <property type="entry name" value="Sulfurtransferase TusD"/>
    <property type="match status" value="1"/>
</dbReference>
<dbReference type="Gene3D" id="3.40.1260.10">
    <property type="entry name" value="DsrEFH-like"/>
    <property type="match status" value="1"/>
</dbReference>
<dbReference type="HAMAP" id="MF_00390">
    <property type="entry name" value="Thiourid_synth_D"/>
    <property type="match status" value="1"/>
</dbReference>
<dbReference type="InterPro" id="IPR027396">
    <property type="entry name" value="DsrEFH-like"/>
</dbReference>
<dbReference type="InterPro" id="IPR003787">
    <property type="entry name" value="Sulphur_relay_DsrE/F-like"/>
</dbReference>
<dbReference type="InterPro" id="IPR017463">
    <property type="entry name" value="Sulphur_relay_TusD/DsrE"/>
</dbReference>
<dbReference type="NCBIfam" id="NF001237">
    <property type="entry name" value="PRK00207.1"/>
    <property type="match status" value="1"/>
</dbReference>
<dbReference type="NCBIfam" id="TIGR03012">
    <property type="entry name" value="sulf_tusD_dsrE"/>
    <property type="match status" value="1"/>
</dbReference>
<dbReference type="PANTHER" id="PTHR34874">
    <property type="entry name" value="PROTEIN YCHN"/>
    <property type="match status" value="1"/>
</dbReference>
<dbReference type="PANTHER" id="PTHR34874:SF3">
    <property type="entry name" value="SULFURTRANSFERASE TUSD"/>
    <property type="match status" value="1"/>
</dbReference>
<dbReference type="Pfam" id="PF02635">
    <property type="entry name" value="DsrE"/>
    <property type="match status" value="1"/>
</dbReference>
<dbReference type="SUPFAM" id="SSF75169">
    <property type="entry name" value="DsrEFH-like"/>
    <property type="match status" value="1"/>
</dbReference>
<gene>
    <name evidence="1" type="primary">tusD</name>
    <name type="ordered locus">YPK_0272</name>
</gene>
<evidence type="ECO:0000255" key="1">
    <source>
        <dbReference type="HAMAP-Rule" id="MF_00390"/>
    </source>
</evidence>
<name>TUSD_YERPY</name>
<organism>
    <name type="scientific">Yersinia pseudotuberculosis serotype O:3 (strain YPIII)</name>
    <dbReference type="NCBI Taxonomy" id="502800"/>
    <lineage>
        <taxon>Bacteria</taxon>
        <taxon>Pseudomonadati</taxon>
        <taxon>Pseudomonadota</taxon>
        <taxon>Gammaproteobacteria</taxon>
        <taxon>Enterobacterales</taxon>
        <taxon>Yersiniaceae</taxon>
        <taxon>Yersinia</taxon>
    </lineage>
</organism>
<accession>B1JIV0</accession>
<sequence length="131" mass="13959">MSALKYCLLVTGPAYGTQQASSAYQFAQAVVGAGHHLVSIFFYREGVLNANQLTAPASDEFDLVRAWQQLAAEQAVTLNVCVAAALRRGITDQHEAEQLNLAAANLQPGFTLSGLGALAEATLTCDRMVQF</sequence>
<proteinExistence type="inferred from homology"/>
<comment type="function">
    <text evidence="1">Part of a sulfur-relay system required for 2-thiolation of 5-methylaminomethyl-2-thiouridine (mnm(5)s(2)U) at tRNA wobble positions. Accepts sulfur from TusA and transfers it in turn to TusE.</text>
</comment>
<comment type="subunit">
    <text evidence="1">Heterohexamer, formed by a dimer of trimers. The hexameric TusBCD complex contains 2 copies each of TusB, TusC and TusD. The TusBCD complex interacts with TusE.</text>
</comment>
<comment type="subcellular location">
    <subcellularLocation>
        <location evidence="1">Cytoplasm</location>
    </subcellularLocation>
</comment>
<comment type="similarity">
    <text evidence="1">Belongs to the DsrE/TusD family.</text>
</comment>
<protein>
    <recommendedName>
        <fullName evidence="1">Sulfurtransferase TusD</fullName>
        <ecNumber evidence="1">2.8.1.-</ecNumber>
    </recommendedName>
    <alternativeName>
        <fullName evidence="1">tRNA 2-thiouridine synthesizing protein D</fullName>
    </alternativeName>
</protein>
<keyword id="KW-0963">Cytoplasm</keyword>
<keyword id="KW-0808">Transferase</keyword>
<keyword id="KW-0819">tRNA processing</keyword>
<reference key="1">
    <citation type="submission" date="2008-02" db="EMBL/GenBank/DDBJ databases">
        <title>Complete sequence of Yersinia pseudotuberculosis YPIII.</title>
        <authorList>
            <consortium name="US DOE Joint Genome Institute"/>
            <person name="Copeland A."/>
            <person name="Lucas S."/>
            <person name="Lapidus A."/>
            <person name="Glavina del Rio T."/>
            <person name="Dalin E."/>
            <person name="Tice H."/>
            <person name="Bruce D."/>
            <person name="Goodwin L."/>
            <person name="Pitluck S."/>
            <person name="Munk A.C."/>
            <person name="Brettin T."/>
            <person name="Detter J.C."/>
            <person name="Han C."/>
            <person name="Tapia R."/>
            <person name="Schmutz J."/>
            <person name="Larimer F."/>
            <person name="Land M."/>
            <person name="Hauser L."/>
            <person name="Challacombe J.F."/>
            <person name="Green L."/>
            <person name="Lindler L.E."/>
            <person name="Nikolich M.P."/>
            <person name="Richardson P."/>
        </authorList>
    </citation>
    <scope>NUCLEOTIDE SEQUENCE [LARGE SCALE GENOMIC DNA]</scope>
    <source>
        <strain>YPIII</strain>
    </source>
</reference>
<feature type="chain" id="PRO_1000122879" description="Sulfurtransferase TusD">
    <location>
        <begin position="1"/>
        <end position="131"/>
    </location>
</feature>
<feature type="active site" description="Cysteine persulfide intermediate" evidence="1">
    <location>
        <position position="81"/>
    </location>
</feature>